<reference key="1">
    <citation type="submission" date="2007-10" db="EMBL/GenBank/DDBJ databases">
        <title>Complete sequence of chromosome of Desulforudis audaxviator MP104C.</title>
        <authorList>
            <person name="Copeland A."/>
            <person name="Lucas S."/>
            <person name="Lapidus A."/>
            <person name="Barry K."/>
            <person name="Glavina del Rio T."/>
            <person name="Dalin E."/>
            <person name="Tice H."/>
            <person name="Bruce D."/>
            <person name="Pitluck S."/>
            <person name="Lowry S.R."/>
            <person name="Larimer F."/>
            <person name="Land M.L."/>
            <person name="Hauser L."/>
            <person name="Kyrpides N."/>
            <person name="Ivanova N.N."/>
            <person name="Richardson P."/>
        </authorList>
    </citation>
    <scope>NUCLEOTIDE SEQUENCE [LARGE SCALE GENOMIC DNA]</scope>
    <source>
        <strain>MP104C</strain>
    </source>
</reference>
<sequence>MQYSRSVGRLIEELARLPGIGPKTAQRLAFHLVTAPREAAESLSRAILEARDKLVFCRVCANIADENPCGICRDQNRDHGLICVVERPRDVLAVEKAHGYRGLYHVLNGSLSPLQGVGPEELNIAALVTRVREGTVREVIVATNATVEGEATALYLARLLRPLNVRVTRLAFGLPVGSDLEYADGRTLARAIEGRREV</sequence>
<keyword id="KW-0227">DNA damage</keyword>
<keyword id="KW-0233">DNA recombination</keyword>
<keyword id="KW-0234">DNA repair</keyword>
<keyword id="KW-0479">Metal-binding</keyword>
<keyword id="KW-1185">Reference proteome</keyword>
<keyword id="KW-0862">Zinc</keyword>
<keyword id="KW-0863">Zinc-finger</keyword>
<protein>
    <recommendedName>
        <fullName evidence="1">Recombination protein RecR</fullName>
    </recommendedName>
</protein>
<gene>
    <name evidence="1" type="primary">recR</name>
    <name type="ordered locus">Daud_0033</name>
</gene>
<comment type="function">
    <text evidence="1">May play a role in DNA repair. It seems to be involved in an RecBC-independent recombinational process of DNA repair. It may act with RecF and RecO.</text>
</comment>
<comment type="similarity">
    <text evidence="1">Belongs to the RecR family.</text>
</comment>
<name>RECR_DESAP</name>
<proteinExistence type="inferred from homology"/>
<organism>
    <name type="scientific">Desulforudis audaxviator (strain MP104C)</name>
    <dbReference type="NCBI Taxonomy" id="477974"/>
    <lineage>
        <taxon>Bacteria</taxon>
        <taxon>Bacillati</taxon>
        <taxon>Bacillota</taxon>
        <taxon>Clostridia</taxon>
        <taxon>Thermoanaerobacterales</taxon>
        <taxon>Candidatus Desulforudaceae</taxon>
        <taxon>Candidatus Desulforudis</taxon>
    </lineage>
</organism>
<accession>B1I162</accession>
<evidence type="ECO:0000255" key="1">
    <source>
        <dbReference type="HAMAP-Rule" id="MF_00017"/>
    </source>
</evidence>
<feature type="chain" id="PRO_1000195381" description="Recombination protein RecR">
    <location>
        <begin position="1"/>
        <end position="198"/>
    </location>
</feature>
<feature type="domain" description="Toprim" evidence="1">
    <location>
        <begin position="80"/>
        <end position="175"/>
    </location>
</feature>
<feature type="zinc finger region" description="C4-type" evidence="1">
    <location>
        <begin position="57"/>
        <end position="72"/>
    </location>
</feature>
<dbReference type="EMBL" id="CP000860">
    <property type="protein sequence ID" value="ACA58602.1"/>
    <property type="molecule type" value="Genomic_DNA"/>
</dbReference>
<dbReference type="RefSeq" id="WP_012301196.1">
    <property type="nucleotide sequence ID" value="NC_010424.1"/>
</dbReference>
<dbReference type="SMR" id="B1I162"/>
<dbReference type="STRING" id="477974.Daud_0033"/>
<dbReference type="KEGG" id="dau:Daud_0033"/>
<dbReference type="eggNOG" id="COG0353">
    <property type="taxonomic scope" value="Bacteria"/>
</dbReference>
<dbReference type="HOGENOM" id="CLU_060739_1_0_9"/>
<dbReference type="OrthoDB" id="9802672at2"/>
<dbReference type="Proteomes" id="UP000008544">
    <property type="component" value="Chromosome"/>
</dbReference>
<dbReference type="GO" id="GO:0003677">
    <property type="term" value="F:DNA binding"/>
    <property type="evidence" value="ECO:0007669"/>
    <property type="project" value="UniProtKB-UniRule"/>
</dbReference>
<dbReference type="GO" id="GO:0008270">
    <property type="term" value="F:zinc ion binding"/>
    <property type="evidence" value="ECO:0007669"/>
    <property type="project" value="UniProtKB-KW"/>
</dbReference>
<dbReference type="GO" id="GO:0006310">
    <property type="term" value="P:DNA recombination"/>
    <property type="evidence" value="ECO:0007669"/>
    <property type="project" value="UniProtKB-UniRule"/>
</dbReference>
<dbReference type="GO" id="GO:0006281">
    <property type="term" value="P:DNA repair"/>
    <property type="evidence" value="ECO:0007669"/>
    <property type="project" value="UniProtKB-UniRule"/>
</dbReference>
<dbReference type="CDD" id="cd01025">
    <property type="entry name" value="TOPRIM_recR"/>
    <property type="match status" value="1"/>
</dbReference>
<dbReference type="Gene3D" id="3.30.60.80">
    <property type="match status" value="1"/>
</dbReference>
<dbReference type="Gene3D" id="3.40.1360.10">
    <property type="match status" value="1"/>
</dbReference>
<dbReference type="Gene3D" id="6.10.250.240">
    <property type="match status" value="1"/>
</dbReference>
<dbReference type="Gene3D" id="1.10.8.420">
    <property type="entry name" value="RecR Domain 1"/>
    <property type="match status" value="1"/>
</dbReference>
<dbReference type="HAMAP" id="MF_00017">
    <property type="entry name" value="RecR"/>
    <property type="match status" value="1"/>
</dbReference>
<dbReference type="InterPro" id="IPR000093">
    <property type="entry name" value="DNA_Rcmb_RecR"/>
</dbReference>
<dbReference type="InterPro" id="IPR003583">
    <property type="entry name" value="Hlx-hairpin-Hlx_DNA-bd_motif"/>
</dbReference>
<dbReference type="InterPro" id="IPR023627">
    <property type="entry name" value="Rcmb_RecR"/>
</dbReference>
<dbReference type="InterPro" id="IPR015967">
    <property type="entry name" value="Rcmb_RecR_Znf"/>
</dbReference>
<dbReference type="InterPro" id="IPR006171">
    <property type="entry name" value="TOPRIM_dom"/>
</dbReference>
<dbReference type="InterPro" id="IPR034137">
    <property type="entry name" value="TOPRIM_RecR"/>
</dbReference>
<dbReference type="NCBIfam" id="TIGR00615">
    <property type="entry name" value="recR"/>
    <property type="match status" value="1"/>
</dbReference>
<dbReference type="PANTHER" id="PTHR30446">
    <property type="entry name" value="RECOMBINATION PROTEIN RECR"/>
    <property type="match status" value="1"/>
</dbReference>
<dbReference type="PANTHER" id="PTHR30446:SF0">
    <property type="entry name" value="RECOMBINATION PROTEIN RECR"/>
    <property type="match status" value="1"/>
</dbReference>
<dbReference type="Pfam" id="PF21175">
    <property type="entry name" value="RecR_C"/>
    <property type="match status" value="1"/>
</dbReference>
<dbReference type="Pfam" id="PF21176">
    <property type="entry name" value="RecR_HhH"/>
    <property type="match status" value="1"/>
</dbReference>
<dbReference type="Pfam" id="PF02132">
    <property type="entry name" value="RecR_ZnF"/>
    <property type="match status" value="1"/>
</dbReference>
<dbReference type="Pfam" id="PF13662">
    <property type="entry name" value="Toprim_4"/>
    <property type="match status" value="1"/>
</dbReference>
<dbReference type="SMART" id="SM00278">
    <property type="entry name" value="HhH1"/>
    <property type="match status" value="1"/>
</dbReference>
<dbReference type="SMART" id="SM00493">
    <property type="entry name" value="TOPRIM"/>
    <property type="match status" value="1"/>
</dbReference>
<dbReference type="SUPFAM" id="SSF111304">
    <property type="entry name" value="Recombination protein RecR"/>
    <property type="match status" value="1"/>
</dbReference>
<dbReference type="PROSITE" id="PS01300">
    <property type="entry name" value="RECR"/>
    <property type="match status" value="1"/>
</dbReference>
<dbReference type="PROSITE" id="PS50880">
    <property type="entry name" value="TOPRIM"/>
    <property type="match status" value="1"/>
</dbReference>